<comment type="similarity">
    <text evidence="1">Belongs to the universal ribosomal protein uL13 family.</text>
</comment>
<proteinExistence type="evidence at transcript level"/>
<evidence type="ECO:0000305" key="1"/>
<dbReference type="EMBL" id="U18488">
    <property type="protein sequence ID" value="AAA57517.1"/>
    <property type="molecule type" value="mRNA"/>
</dbReference>
<dbReference type="SMR" id="Q91487"/>
<dbReference type="InParanoid" id="Q91487"/>
<dbReference type="Proteomes" id="UP000472277">
    <property type="component" value="Unplaced"/>
</dbReference>
<dbReference type="GO" id="GO:0022625">
    <property type="term" value="C:cytosolic large ribosomal subunit"/>
    <property type="evidence" value="ECO:0007669"/>
    <property type="project" value="TreeGrafter"/>
</dbReference>
<dbReference type="GO" id="GO:0003729">
    <property type="term" value="F:mRNA binding"/>
    <property type="evidence" value="ECO:0007669"/>
    <property type="project" value="TreeGrafter"/>
</dbReference>
<dbReference type="GO" id="GO:0003735">
    <property type="term" value="F:structural constituent of ribosome"/>
    <property type="evidence" value="ECO:0007669"/>
    <property type="project" value="InterPro"/>
</dbReference>
<dbReference type="GO" id="GO:0017148">
    <property type="term" value="P:negative regulation of translation"/>
    <property type="evidence" value="ECO:0007669"/>
    <property type="project" value="TreeGrafter"/>
</dbReference>
<dbReference type="GO" id="GO:0006412">
    <property type="term" value="P:translation"/>
    <property type="evidence" value="ECO:0007669"/>
    <property type="project" value="InterPro"/>
</dbReference>
<dbReference type="CDD" id="cd00392">
    <property type="entry name" value="Ribosomal_L13"/>
    <property type="match status" value="1"/>
</dbReference>
<dbReference type="FunFam" id="6.10.250.3250:FF:000001">
    <property type="entry name" value="60S ribosomal protein L13a"/>
    <property type="match status" value="1"/>
</dbReference>
<dbReference type="FunFam" id="3.90.1180.10:FF:000002">
    <property type="entry name" value="60S ribosomal protein L16"/>
    <property type="match status" value="1"/>
</dbReference>
<dbReference type="Gene3D" id="6.10.250.3250">
    <property type="match status" value="1"/>
</dbReference>
<dbReference type="Gene3D" id="3.90.1180.10">
    <property type="entry name" value="Ribosomal protein L13"/>
    <property type="match status" value="1"/>
</dbReference>
<dbReference type="InterPro" id="IPR005822">
    <property type="entry name" value="Ribosomal_uL13"/>
</dbReference>
<dbReference type="InterPro" id="IPR023563">
    <property type="entry name" value="Ribosomal_uL13_CS"/>
</dbReference>
<dbReference type="InterPro" id="IPR005755">
    <property type="entry name" value="Ribosomal_uL13_euk/arc"/>
</dbReference>
<dbReference type="InterPro" id="IPR036899">
    <property type="entry name" value="Ribosomal_uL13_sf"/>
</dbReference>
<dbReference type="NCBIfam" id="TIGR01077">
    <property type="entry name" value="L13_A_E"/>
    <property type="match status" value="1"/>
</dbReference>
<dbReference type="PANTHER" id="PTHR11545:SF3">
    <property type="entry name" value="LARGE RIBOSOMAL SUBUNIT PROTEIN UL13"/>
    <property type="match status" value="1"/>
</dbReference>
<dbReference type="PANTHER" id="PTHR11545">
    <property type="entry name" value="RIBOSOMAL PROTEIN L13"/>
    <property type="match status" value="1"/>
</dbReference>
<dbReference type="Pfam" id="PF00572">
    <property type="entry name" value="Ribosomal_L13"/>
    <property type="match status" value="1"/>
</dbReference>
<dbReference type="SUPFAM" id="SSF52161">
    <property type="entry name" value="Ribosomal protein L13"/>
    <property type="match status" value="1"/>
</dbReference>
<dbReference type="PROSITE" id="PS00783">
    <property type="entry name" value="RIBOSOMAL_L13"/>
    <property type="match status" value="1"/>
</dbReference>
<protein>
    <recommendedName>
        <fullName evidence="1">Large ribosomal subunit protein uL13</fullName>
    </recommendedName>
    <alternativeName>
        <fullName>60S ribosomal protein L13a</fullName>
    </alternativeName>
    <alternativeName>
        <fullName>Transplantation antigen P198 homolog</fullName>
    </alternativeName>
</protein>
<name>RL13A_SALTR</name>
<reference key="1">
    <citation type="submission" date="1994-12" db="EMBL/GenBank/DDBJ databases">
        <authorList>
            <person name="McGowan C."/>
            <person name="Davidson W.S."/>
        </authorList>
    </citation>
    <scope>NUCLEOTIDE SEQUENCE [MRNA]</scope>
    <source>
        <tissue>Liver</tissue>
    </source>
</reference>
<organism>
    <name type="scientific">Salmo trutta</name>
    <name type="common">Brown trout</name>
    <dbReference type="NCBI Taxonomy" id="8032"/>
    <lineage>
        <taxon>Eukaryota</taxon>
        <taxon>Metazoa</taxon>
        <taxon>Chordata</taxon>
        <taxon>Craniata</taxon>
        <taxon>Vertebrata</taxon>
        <taxon>Euteleostomi</taxon>
        <taxon>Actinopterygii</taxon>
        <taxon>Neopterygii</taxon>
        <taxon>Teleostei</taxon>
        <taxon>Protacanthopterygii</taxon>
        <taxon>Salmoniformes</taxon>
        <taxon>Salmonidae</taxon>
        <taxon>Salmoninae</taxon>
        <taxon>Salmo</taxon>
    </lineage>
</organism>
<accession>Q91487</accession>
<keyword id="KW-1185">Reference proteome</keyword>
<keyword id="KW-0687">Ribonucleoprotein</keyword>
<keyword id="KW-0689">Ribosomal protein</keyword>
<gene>
    <name type="primary">rpl13a</name>
</gene>
<sequence>LLGRLAAIVANEVLLGHKVVVVRCEGINISGNFYRNKLKYLAFLRKRMNTNPSRGPYHFRAPSRIFWRTVRGMLPHKTKRGQAALERLKVFDGVPPPYDKRKRMVVPAALKIVRLKPTRKFALLGRLAHEVGWKYQAITATLEEKRKEKAKIRYAKKKTVTKLSKLAEKNVESTISKYTAVLKQYGVLV</sequence>
<feature type="chain" id="PRO_0000133774" description="Large ribosomal subunit protein uL13">
    <location>
        <begin position="1" status="less than"/>
        <end position="189"/>
    </location>
</feature>
<feature type="non-terminal residue">
    <location>
        <position position="1"/>
    </location>
</feature>